<proteinExistence type="inferred from homology"/>
<name>RF1_HELPJ</name>
<sequence>MSILAEKLSSILKRYDELTALLSSVEVVSDIKKLTELSKEQSSIEEISVASKEYLSVLEGIKENKELLEDKELSELAKEELKILEIQKSELETAIKQLLIPKDPNDDKNIYLELRAGTGGDEAGIFVGDLFKAYCRYADLKKWKVEIVSSSENSVGGYKEIIVLIKGKGVYSRLKFEAGTHRVQRVPETESQGRIHTSAITVAIMPEVDDVEVSINPSDLKIEVFRAGGHGGQCVNTTDSAVRITHLPTNISVSMQDEKSQHKNKDKALKILKARLYEKQIEEQQLANAKDRKEQVGSGDRSERIRTYNYPQNRLSEHRINLTLYSLEEIMLSGNLDEVINPLIAHAQSQFE</sequence>
<dbReference type="EMBL" id="AE001439">
    <property type="protein sequence ID" value="AAD05656.1"/>
    <property type="molecule type" value="Genomic_DNA"/>
</dbReference>
<dbReference type="PIR" id="F71977">
    <property type="entry name" value="F71977"/>
</dbReference>
<dbReference type="RefSeq" id="WP_000025168.1">
    <property type="nucleotide sequence ID" value="NC_000921.1"/>
</dbReference>
<dbReference type="SMR" id="Q9ZMZ0"/>
<dbReference type="KEGG" id="hpj:jhp_0072"/>
<dbReference type="PATRIC" id="fig|85963.30.peg.962"/>
<dbReference type="eggNOG" id="COG0216">
    <property type="taxonomic scope" value="Bacteria"/>
</dbReference>
<dbReference type="Proteomes" id="UP000000804">
    <property type="component" value="Chromosome"/>
</dbReference>
<dbReference type="GO" id="GO:0005737">
    <property type="term" value="C:cytoplasm"/>
    <property type="evidence" value="ECO:0007669"/>
    <property type="project" value="UniProtKB-SubCell"/>
</dbReference>
<dbReference type="GO" id="GO:0016149">
    <property type="term" value="F:translation release factor activity, codon specific"/>
    <property type="evidence" value="ECO:0007669"/>
    <property type="project" value="UniProtKB-UniRule"/>
</dbReference>
<dbReference type="FunFam" id="3.30.160.20:FF:000004">
    <property type="entry name" value="Peptide chain release factor 1"/>
    <property type="match status" value="1"/>
</dbReference>
<dbReference type="FunFam" id="3.30.70.1660:FF:000002">
    <property type="entry name" value="Peptide chain release factor 1"/>
    <property type="match status" value="1"/>
</dbReference>
<dbReference type="FunFam" id="3.30.70.1660:FF:000004">
    <property type="entry name" value="Peptide chain release factor 1"/>
    <property type="match status" value="1"/>
</dbReference>
<dbReference type="Gene3D" id="3.30.160.20">
    <property type="match status" value="1"/>
</dbReference>
<dbReference type="Gene3D" id="3.30.70.1660">
    <property type="match status" value="1"/>
</dbReference>
<dbReference type="Gene3D" id="6.10.140.1950">
    <property type="match status" value="1"/>
</dbReference>
<dbReference type="HAMAP" id="MF_00093">
    <property type="entry name" value="Rel_fac_1"/>
    <property type="match status" value="1"/>
</dbReference>
<dbReference type="InterPro" id="IPR005139">
    <property type="entry name" value="PCRF"/>
</dbReference>
<dbReference type="InterPro" id="IPR000352">
    <property type="entry name" value="Pep_chain_release_fac_I"/>
</dbReference>
<dbReference type="InterPro" id="IPR045853">
    <property type="entry name" value="Pep_chain_release_fac_I_sf"/>
</dbReference>
<dbReference type="InterPro" id="IPR050057">
    <property type="entry name" value="Prokaryotic/Mito_RF"/>
</dbReference>
<dbReference type="InterPro" id="IPR004373">
    <property type="entry name" value="RF-1"/>
</dbReference>
<dbReference type="NCBIfam" id="TIGR00019">
    <property type="entry name" value="prfA"/>
    <property type="match status" value="1"/>
</dbReference>
<dbReference type="NCBIfam" id="NF001859">
    <property type="entry name" value="PRK00591.1"/>
    <property type="match status" value="1"/>
</dbReference>
<dbReference type="PANTHER" id="PTHR43804">
    <property type="entry name" value="LD18447P"/>
    <property type="match status" value="1"/>
</dbReference>
<dbReference type="PANTHER" id="PTHR43804:SF7">
    <property type="entry name" value="LD18447P"/>
    <property type="match status" value="1"/>
</dbReference>
<dbReference type="Pfam" id="PF03462">
    <property type="entry name" value="PCRF"/>
    <property type="match status" value="1"/>
</dbReference>
<dbReference type="Pfam" id="PF00472">
    <property type="entry name" value="RF-1"/>
    <property type="match status" value="1"/>
</dbReference>
<dbReference type="SMART" id="SM00937">
    <property type="entry name" value="PCRF"/>
    <property type="match status" value="1"/>
</dbReference>
<dbReference type="SUPFAM" id="SSF75620">
    <property type="entry name" value="Release factor"/>
    <property type="match status" value="1"/>
</dbReference>
<dbReference type="PROSITE" id="PS00745">
    <property type="entry name" value="RF_PROK_I"/>
    <property type="match status" value="1"/>
</dbReference>
<feature type="chain" id="PRO_0000177682" description="Peptide chain release factor 1">
    <location>
        <begin position="1"/>
        <end position="352"/>
    </location>
</feature>
<feature type="region of interest" description="Disordered" evidence="2">
    <location>
        <begin position="288"/>
        <end position="309"/>
    </location>
</feature>
<feature type="compositionally biased region" description="Basic and acidic residues" evidence="2">
    <location>
        <begin position="289"/>
        <end position="306"/>
    </location>
</feature>
<feature type="modified residue" description="N5-methylglutamine" evidence="1">
    <location>
        <position position="233"/>
    </location>
</feature>
<comment type="function">
    <text evidence="1">Peptide chain release factor 1 directs the termination of translation in response to the peptide chain termination codons UAG and UAA.</text>
</comment>
<comment type="subcellular location">
    <subcellularLocation>
        <location evidence="1">Cytoplasm</location>
    </subcellularLocation>
</comment>
<comment type="PTM">
    <text evidence="1">Methylated by PrmC. Methylation increases the termination efficiency of RF1 (By similarity).</text>
</comment>
<comment type="similarity">
    <text evidence="3">Belongs to the prokaryotic/mitochondrial release factor family.</text>
</comment>
<evidence type="ECO:0000250" key="1"/>
<evidence type="ECO:0000256" key="2">
    <source>
        <dbReference type="SAM" id="MobiDB-lite"/>
    </source>
</evidence>
<evidence type="ECO:0000305" key="3"/>
<gene>
    <name type="primary">prfA</name>
    <name type="ordered locus">jhp_0072</name>
</gene>
<keyword id="KW-0963">Cytoplasm</keyword>
<keyword id="KW-0488">Methylation</keyword>
<keyword id="KW-0648">Protein biosynthesis</keyword>
<reference key="1">
    <citation type="journal article" date="1999" name="Nature">
        <title>Genomic sequence comparison of two unrelated isolates of the human gastric pathogen Helicobacter pylori.</title>
        <authorList>
            <person name="Alm R.A."/>
            <person name="Ling L.-S.L."/>
            <person name="Moir D.T."/>
            <person name="King B.L."/>
            <person name="Brown E.D."/>
            <person name="Doig P.C."/>
            <person name="Smith D.R."/>
            <person name="Noonan B."/>
            <person name="Guild B.C."/>
            <person name="deJonge B.L."/>
            <person name="Carmel G."/>
            <person name="Tummino P.J."/>
            <person name="Caruso A."/>
            <person name="Uria-Nickelsen M."/>
            <person name="Mills D.M."/>
            <person name="Ives C."/>
            <person name="Gibson R."/>
            <person name="Merberg D."/>
            <person name="Mills S.D."/>
            <person name="Jiang Q."/>
            <person name="Taylor D.E."/>
            <person name="Vovis G.F."/>
            <person name="Trust T.J."/>
        </authorList>
    </citation>
    <scope>NUCLEOTIDE SEQUENCE [LARGE SCALE GENOMIC DNA]</scope>
    <source>
        <strain>J99 / ATCC 700824</strain>
    </source>
</reference>
<protein>
    <recommendedName>
        <fullName>Peptide chain release factor 1</fullName>
        <shortName>RF-1</shortName>
    </recommendedName>
</protein>
<organism>
    <name type="scientific">Helicobacter pylori (strain J99 / ATCC 700824)</name>
    <name type="common">Campylobacter pylori J99</name>
    <dbReference type="NCBI Taxonomy" id="85963"/>
    <lineage>
        <taxon>Bacteria</taxon>
        <taxon>Pseudomonadati</taxon>
        <taxon>Campylobacterota</taxon>
        <taxon>Epsilonproteobacteria</taxon>
        <taxon>Campylobacterales</taxon>
        <taxon>Helicobacteraceae</taxon>
        <taxon>Helicobacter</taxon>
    </lineage>
</organism>
<accession>Q9ZMZ0</accession>